<accession>P0CY72</accession>
<proteinExistence type="evidence at transcript level"/>
<sequence>AACQLGTAASFARDKQDYPAVRSDGRQDSKDSTLDRIAKRCSEGGDFCSKNSECCDKKCQDEGEGRGVCLIVPQNVILLH</sequence>
<keyword id="KW-0165">Cleavage on pair of basic residues</keyword>
<keyword id="KW-1015">Disulfide bond</keyword>
<keyword id="KW-0872">Ion channel impairing toxin</keyword>
<keyword id="KW-0960">Knottin</keyword>
<keyword id="KW-0528">Neurotoxin</keyword>
<keyword id="KW-0964">Secreted</keyword>
<keyword id="KW-0732">Signal</keyword>
<keyword id="KW-0800">Toxin</keyword>
<comment type="subcellular location">
    <subcellularLocation>
        <location evidence="1">Secreted</location>
    </subcellularLocation>
</comment>
<comment type="tissue specificity">
    <text>Expressed by the venom duct.</text>
</comment>
<comment type="domain">
    <text>The presence of a 'disulfide through disulfide knot' structurally defines this protein as a knottin.</text>
</comment>
<comment type="domain">
    <text>The cysteine framework is VI/VII (C-C-CC-C-C).</text>
</comment>
<comment type="similarity">
    <text evidence="3">Belongs to the conotoxin O1 superfamily.</text>
</comment>
<evidence type="ECO:0000250" key="1"/>
<evidence type="ECO:0000255" key="2"/>
<evidence type="ECO:0000305" key="3"/>
<feature type="signal peptide" evidence="2">
    <location>
        <begin position="1" status="less than"/>
        <end position="8"/>
    </location>
</feature>
<feature type="propeptide" id="PRO_0000409960" evidence="1">
    <location>
        <begin position="9"/>
        <end position="40"/>
    </location>
</feature>
<feature type="peptide" id="PRO_0000409961" description="Conotoxin Bu14">
    <location>
        <begin position="41"/>
        <end position="80"/>
    </location>
</feature>
<feature type="disulfide bond" evidence="1">
    <location>
        <begin position="41"/>
        <end position="55"/>
    </location>
</feature>
<feature type="disulfide bond" evidence="1">
    <location>
        <begin position="48"/>
        <end position="59"/>
    </location>
</feature>
<feature type="disulfide bond" evidence="1">
    <location>
        <begin position="54"/>
        <end position="69"/>
    </location>
</feature>
<feature type="non-terminal residue">
    <location>
        <position position="1"/>
    </location>
</feature>
<reference key="1">
    <citation type="journal article" date="2011" name="BMC Genomics">
        <title>Characterization of the Conus bullatus genome and its venom-duct transcriptome.</title>
        <authorList>
            <person name="Hu H."/>
            <person name="Bandyopadhyay P.K."/>
            <person name="Olivera B.M."/>
            <person name="Yandell M."/>
        </authorList>
    </citation>
    <scope>NUCLEOTIDE SEQUENCE [MRNA]</scope>
    <source>
        <tissue>Venom duct</tissue>
    </source>
</reference>
<organism>
    <name type="scientific">Conus bullatus</name>
    <name type="common">Bubble cone</name>
    <dbReference type="NCBI Taxonomy" id="89438"/>
    <lineage>
        <taxon>Eukaryota</taxon>
        <taxon>Metazoa</taxon>
        <taxon>Spiralia</taxon>
        <taxon>Lophotrochozoa</taxon>
        <taxon>Mollusca</taxon>
        <taxon>Gastropoda</taxon>
        <taxon>Caenogastropoda</taxon>
        <taxon>Neogastropoda</taxon>
        <taxon>Conoidea</taxon>
        <taxon>Conidae</taxon>
        <taxon>Conus</taxon>
        <taxon>Textilia</taxon>
    </lineage>
</organism>
<name>O16E_CONBU</name>
<dbReference type="SMR" id="P0CY72"/>
<dbReference type="GO" id="GO:0005576">
    <property type="term" value="C:extracellular region"/>
    <property type="evidence" value="ECO:0007669"/>
    <property type="project" value="UniProtKB-SubCell"/>
</dbReference>
<dbReference type="GO" id="GO:0099106">
    <property type="term" value="F:ion channel regulator activity"/>
    <property type="evidence" value="ECO:0007669"/>
    <property type="project" value="UniProtKB-KW"/>
</dbReference>
<dbReference type="GO" id="GO:0090729">
    <property type="term" value="F:toxin activity"/>
    <property type="evidence" value="ECO:0007669"/>
    <property type="project" value="UniProtKB-KW"/>
</dbReference>
<protein>
    <recommendedName>
        <fullName>Conotoxin Bu14</fullName>
    </recommendedName>
</protein>